<evidence type="ECO:0000250" key="1"/>
<evidence type="ECO:0000255" key="2">
    <source>
        <dbReference type="PROSITE-ProRule" id="PRU00159"/>
    </source>
</evidence>
<evidence type="ECO:0000255" key="3">
    <source>
        <dbReference type="PROSITE-ProRule" id="PRU10027"/>
    </source>
</evidence>
<evidence type="ECO:0000256" key="4">
    <source>
        <dbReference type="SAM" id="MobiDB-lite"/>
    </source>
</evidence>
<evidence type="ECO:0000269" key="5">
    <source>
    </source>
</evidence>
<evidence type="ECO:0000269" key="6">
    <source>
    </source>
</evidence>
<evidence type="ECO:0000269" key="7">
    <source>
    </source>
</evidence>
<evidence type="ECO:0000269" key="8">
    <source>
    </source>
</evidence>
<evidence type="ECO:0000269" key="9">
    <source>
    </source>
</evidence>
<evidence type="ECO:0000305" key="10"/>
<evidence type="ECO:0007829" key="11">
    <source>
        <dbReference type="PDB" id="2IWI"/>
    </source>
</evidence>
<evidence type="ECO:0007829" key="12">
    <source>
        <dbReference type="PDB" id="4X7Q"/>
    </source>
</evidence>
<comment type="function">
    <text evidence="7 8 9">Proto-oncogene with serine/threonine kinase activity involved in cell survival and cell proliferation. Exerts its oncogenic activity through: the regulation of MYC transcriptional activity, the regulation of cell cycle progression, the regulation of cap-dependent protein translation and through survival signaling by phosphorylation of a pro-apoptotic protein, BAD. Phosphorylation of MYC leads to an increase of MYC protein stability and thereby an increase transcriptional activity. The stabilization of MYC exerted by PIM2 might explain partly the strong synergism between these 2 oncogenes in tumorigenesis. Regulates cap-dependent protein translation in a mammalian target of rapamycin complex 1 (mTORC1)-independent manner and in parallel to the PI3K-Akt pathway. Mediates survival signaling through phosphorylation of BAD, which induces release of the anti-apoptotic protein Bcl-X(L)/BCL2L1. Promotes cell survival in response to a variety of proliferative signals via positive regulation of the I-kappa-B kinase/NF-kappa-B cascade; this process requires phosphorylation of MAP3K8/COT. Promotes growth factor-independent proliferation by phosphorylation of cell cycle factors such as CDKN1A and CDKN1B. Involved in the positive regulation of chondrocyte survival and autophagy in the epiphyseal growth plate.</text>
</comment>
<comment type="catalytic activity">
    <reaction>
        <text>L-seryl-[protein] + ATP = O-phospho-L-seryl-[protein] + ADP + H(+)</text>
        <dbReference type="Rhea" id="RHEA:17989"/>
        <dbReference type="Rhea" id="RHEA-COMP:9863"/>
        <dbReference type="Rhea" id="RHEA-COMP:11604"/>
        <dbReference type="ChEBI" id="CHEBI:15378"/>
        <dbReference type="ChEBI" id="CHEBI:29999"/>
        <dbReference type="ChEBI" id="CHEBI:30616"/>
        <dbReference type="ChEBI" id="CHEBI:83421"/>
        <dbReference type="ChEBI" id="CHEBI:456216"/>
        <dbReference type="EC" id="2.7.11.1"/>
    </reaction>
</comment>
<comment type="catalytic activity">
    <reaction>
        <text>L-threonyl-[protein] + ATP = O-phospho-L-threonyl-[protein] + ADP + H(+)</text>
        <dbReference type="Rhea" id="RHEA:46608"/>
        <dbReference type="Rhea" id="RHEA-COMP:11060"/>
        <dbReference type="Rhea" id="RHEA-COMP:11605"/>
        <dbReference type="ChEBI" id="CHEBI:15378"/>
        <dbReference type="ChEBI" id="CHEBI:30013"/>
        <dbReference type="ChEBI" id="CHEBI:30616"/>
        <dbReference type="ChEBI" id="CHEBI:61977"/>
        <dbReference type="ChEBI" id="CHEBI:456216"/>
        <dbReference type="EC" id="2.7.11.1"/>
    </reaction>
</comment>
<comment type="subunit">
    <text evidence="1">Interacts with MYC.</text>
</comment>
<comment type="interaction">
    <interactant intactId="EBI-720425">
        <id>Q9P1W9</id>
    </interactant>
    <interactant intactId="EBI-930964">
        <id>P54253</id>
        <label>ATXN1</label>
    </interactant>
    <organismsDiffer>false</organismsDiffer>
    <experiments>4</experiments>
</comment>
<comment type="interaction">
    <interactant intactId="EBI-720425">
        <id>Q9P1W9</id>
    </interactant>
    <interactant intactId="EBI-740865">
        <id>O75541</id>
        <label>ZNF821</label>
    </interactant>
    <organismsDiffer>false</organismsDiffer>
    <experiments>3</experiments>
</comment>
<comment type="tissue specificity">
    <text evidence="8">Highly expressed in hematopoietic tissues, in leukemic and lymphoma cell lines, testis, small intestine, colon and colorectal adenocarcinoma cells. Weakly expressed in normal liver, but highly expressed in hepatocellular carcinoma tissues.</text>
</comment>
<comment type="induction">
    <text evidence="5">Down-regulated in response to enterovirus 71 (EV71) infection.</text>
</comment>
<comment type="PTM">
    <text evidence="1">Autophosphorylated.</text>
</comment>
<comment type="similarity">
    <text evidence="10">Belongs to the protein kinase superfamily. CAMK Ser/Thr protein kinase family. PIM subfamily.</text>
</comment>
<comment type="sequence caution" evidence="10">
    <conflict type="frameshift">
        <sequence resource="EMBL-CDS" id="AAC78506"/>
    </conflict>
</comment>
<reference key="1">
    <citation type="journal article" date="1998" name="Biochim. Biophys. Acta">
        <title>The human Pim-2 proto-oncogene and its testicular expression.</title>
        <authorList>
            <person name="Baytel D."/>
            <person name="Shalom S."/>
            <person name="Madgar I."/>
            <person name="Weissenberg R."/>
            <person name="Don J."/>
        </authorList>
    </citation>
    <scope>NUCLEOTIDE SEQUENCE [MRNA]</scope>
    <source>
        <tissue>Testis</tissue>
    </source>
</reference>
<reference key="2">
    <citation type="journal article" date="2004" name="Nat. Genet.">
        <title>Complete sequencing and characterization of 21,243 full-length human cDNAs.</title>
        <authorList>
            <person name="Ota T."/>
            <person name="Suzuki Y."/>
            <person name="Nishikawa T."/>
            <person name="Otsuki T."/>
            <person name="Sugiyama T."/>
            <person name="Irie R."/>
            <person name="Wakamatsu A."/>
            <person name="Hayashi K."/>
            <person name="Sato H."/>
            <person name="Nagai K."/>
            <person name="Kimura K."/>
            <person name="Makita H."/>
            <person name="Sekine M."/>
            <person name="Obayashi M."/>
            <person name="Nishi T."/>
            <person name="Shibahara T."/>
            <person name="Tanaka T."/>
            <person name="Ishii S."/>
            <person name="Yamamoto J."/>
            <person name="Saito K."/>
            <person name="Kawai Y."/>
            <person name="Isono Y."/>
            <person name="Nakamura Y."/>
            <person name="Nagahari K."/>
            <person name="Murakami K."/>
            <person name="Yasuda T."/>
            <person name="Iwayanagi T."/>
            <person name="Wagatsuma M."/>
            <person name="Shiratori A."/>
            <person name="Sudo H."/>
            <person name="Hosoiri T."/>
            <person name="Kaku Y."/>
            <person name="Kodaira H."/>
            <person name="Kondo H."/>
            <person name="Sugawara M."/>
            <person name="Takahashi M."/>
            <person name="Kanda K."/>
            <person name="Yokoi T."/>
            <person name="Furuya T."/>
            <person name="Kikkawa E."/>
            <person name="Omura Y."/>
            <person name="Abe K."/>
            <person name="Kamihara K."/>
            <person name="Katsuta N."/>
            <person name="Sato K."/>
            <person name="Tanikawa M."/>
            <person name="Yamazaki M."/>
            <person name="Ninomiya K."/>
            <person name="Ishibashi T."/>
            <person name="Yamashita H."/>
            <person name="Murakawa K."/>
            <person name="Fujimori K."/>
            <person name="Tanai H."/>
            <person name="Kimata M."/>
            <person name="Watanabe M."/>
            <person name="Hiraoka S."/>
            <person name="Chiba Y."/>
            <person name="Ishida S."/>
            <person name="Ono Y."/>
            <person name="Takiguchi S."/>
            <person name="Watanabe S."/>
            <person name="Yosida M."/>
            <person name="Hotuta T."/>
            <person name="Kusano J."/>
            <person name="Kanehori K."/>
            <person name="Takahashi-Fujii A."/>
            <person name="Hara H."/>
            <person name="Tanase T.-O."/>
            <person name="Nomura Y."/>
            <person name="Togiya S."/>
            <person name="Komai F."/>
            <person name="Hara R."/>
            <person name="Takeuchi K."/>
            <person name="Arita M."/>
            <person name="Imose N."/>
            <person name="Musashino K."/>
            <person name="Yuuki H."/>
            <person name="Oshima A."/>
            <person name="Sasaki N."/>
            <person name="Aotsuka S."/>
            <person name="Yoshikawa Y."/>
            <person name="Matsunawa H."/>
            <person name="Ichihara T."/>
            <person name="Shiohata N."/>
            <person name="Sano S."/>
            <person name="Moriya S."/>
            <person name="Momiyama H."/>
            <person name="Satoh N."/>
            <person name="Takami S."/>
            <person name="Terashima Y."/>
            <person name="Suzuki O."/>
            <person name="Nakagawa S."/>
            <person name="Senoh A."/>
            <person name="Mizoguchi H."/>
            <person name="Goto Y."/>
            <person name="Shimizu F."/>
            <person name="Wakebe H."/>
            <person name="Hishigaki H."/>
            <person name="Watanabe T."/>
            <person name="Sugiyama A."/>
            <person name="Takemoto M."/>
            <person name="Kawakami B."/>
            <person name="Yamazaki M."/>
            <person name="Watanabe K."/>
            <person name="Kumagai A."/>
            <person name="Itakura S."/>
            <person name="Fukuzumi Y."/>
            <person name="Fujimori Y."/>
            <person name="Komiyama M."/>
            <person name="Tashiro H."/>
            <person name="Tanigami A."/>
            <person name="Fujiwara T."/>
            <person name="Ono T."/>
            <person name="Yamada K."/>
            <person name="Fujii Y."/>
            <person name="Ozaki K."/>
            <person name="Hirao M."/>
            <person name="Ohmori Y."/>
            <person name="Kawabata A."/>
            <person name="Hikiji T."/>
            <person name="Kobatake N."/>
            <person name="Inagaki H."/>
            <person name="Ikema Y."/>
            <person name="Okamoto S."/>
            <person name="Okitani R."/>
            <person name="Kawakami T."/>
            <person name="Noguchi S."/>
            <person name="Itoh T."/>
            <person name="Shigeta K."/>
            <person name="Senba T."/>
            <person name="Matsumura K."/>
            <person name="Nakajima Y."/>
            <person name="Mizuno T."/>
            <person name="Morinaga M."/>
            <person name="Sasaki M."/>
            <person name="Togashi T."/>
            <person name="Oyama M."/>
            <person name="Hata H."/>
            <person name="Watanabe M."/>
            <person name="Komatsu T."/>
            <person name="Mizushima-Sugano J."/>
            <person name="Satoh T."/>
            <person name="Shirai Y."/>
            <person name="Takahashi Y."/>
            <person name="Nakagawa K."/>
            <person name="Okumura K."/>
            <person name="Nagase T."/>
            <person name="Nomura N."/>
            <person name="Kikuchi H."/>
            <person name="Masuho Y."/>
            <person name="Yamashita R."/>
            <person name="Nakai K."/>
            <person name="Yada T."/>
            <person name="Nakamura Y."/>
            <person name="Ohara O."/>
            <person name="Isogai T."/>
            <person name="Sugano S."/>
        </authorList>
    </citation>
    <scope>NUCLEOTIDE SEQUENCE [LARGE SCALE MRNA]</scope>
</reference>
<reference key="3">
    <citation type="submission" date="2000-05" db="EMBL/GenBank/DDBJ databases">
        <title>Genomic organization of the human UDP-galactose transporter gene.</title>
        <authorList>
            <person name="Ishida N."/>
            <person name="Miura N."/>
            <person name="Yamauchi M."/>
            <person name="Kawakita M."/>
        </authorList>
    </citation>
    <scope>NUCLEOTIDE SEQUENCE [GENOMIC DNA]</scope>
</reference>
<reference key="4">
    <citation type="journal article" date="2005" name="Nature">
        <title>The DNA sequence of the human X chromosome.</title>
        <authorList>
            <person name="Ross M.T."/>
            <person name="Grafham D.V."/>
            <person name="Coffey A.J."/>
            <person name="Scherer S."/>
            <person name="McLay K."/>
            <person name="Muzny D."/>
            <person name="Platzer M."/>
            <person name="Howell G.R."/>
            <person name="Burrows C."/>
            <person name="Bird C.P."/>
            <person name="Frankish A."/>
            <person name="Lovell F.L."/>
            <person name="Howe K.L."/>
            <person name="Ashurst J.L."/>
            <person name="Fulton R.S."/>
            <person name="Sudbrak R."/>
            <person name="Wen G."/>
            <person name="Jones M.C."/>
            <person name="Hurles M.E."/>
            <person name="Andrews T.D."/>
            <person name="Scott C.E."/>
            <person name="Searle S."/>
            <person name="Ramser J."/>
            <person name="Whittaker A."/>
            <person name="Deadman R."/>
            <person name="Carter N.P."/>
            <person name="Hunt S.E."/>
            <person name="Chen R."/>
            <person name="Cree A."/>
            <person name="Gunaratne P."/>
            <person name="Havlak P."/>
            <person name="Hodgson A."/>
            <person name="Metzker M.L."/>
            <person name="Richards S."/>
            <person name="Scott G."/>
            <person name="Steffen D."/>
            <person name="Sodergren E."/>
            <person name="Wheeler D.A."/>
            <person name="Worley K.C."/>
            <person name="Ainscough R."/>
            <person name="Ambrose K.D."/>
            <person name="Ansari-Lari M.A."/>
            <person name="Aradhya S."/>
            <person name="Ashwell R.I."/>
            <person name="Babbage A.K."/>
            <person name="Bagguley C.L."/>
            <person name="Ballabio A."/>
            <person name="Banerjee R."/>
            <person name="Barker G.E."/>
            <person name="Barlow K.F."/>
            <person name="Barrett I.P."/>
            <person name="Bates K.N."/>
            <person name="Beare D.M."/>
            <person name="Beasley H."/>
            <person name="Beasley O."/>
            <person name="Beck A."/>
            <person name="Bethel G."/>
            <person name="Blechschmidt K."/>
            <person name="Brady N."/>
            <person name="Bray-Allen S."/>
            <person name="Bridgeman A.M."/>
            <person name="Brown A.J."/>
            <person name="Brown M.J."/>
            <person name="Bonnin D."/>
            <person name="Bruford E.A."/>
            <person name="Buhay C."/>
            <person name="Burch P."/>
            <person name="Burford D."/>
            <person name="Burgess J."/>
            <person name="Burrill W."/>
            <person name="Burton J."/>
            <person name="Bye J.M."/>
            <person name="Carder C."/>
            <person name="Carrel L."/>
            <person name="Chako J."/>
            <person name="Chapman J.C."/>
            <person name="Chavez D."/>
            <person name="Chen E."/>
            <person name="Chen G."/>
            <person name="Chen Y."/>
            <person name="Chen Z."/>
            <person name="Chinault C."/>
            <person name="Ciccodicola A."/>
            <person name="Clark S.Y."/>
            <person name="Clarke G."/>
            <person name="Clee C.M."/>
            <person name="Clegg S."/>
            <person name="Clerc-Blankenburg K."/>
            <person name="Clifford K."/>
            <person name="Cobley V."/>
            <person name="Cole C.G."/>
            <person name="Conquer J.S."/>
            <person name="Corby N."/>
            <person name="Connor R.E."/>
            <person name="David R."/>
            <person name="Davies J."/>
            <person name="Davis C."/>
            <person name="Davis J."/>
            <person name="Delgado O."/>
            <person name="Deshazo D."/>
            <person name="Dhami P."/>
            <person name="Ding Y."/>
            <person name="Dinh H."/>
            <person name="Dodsworth S."/>
            <person name="Draper H."/>
            <person name="Dugan-Rocha S."/>
            <person name="Dunham A."/>
            <person name="Dunn M."/>
            <person name="Durbin K.J."/>
            <person name="Dutta I."/>
            <person name="Eades T."/>
            <person name="Ellwood M."/>
            <person name="Emery-Cohen A."/>
            <person name="Errington H."/>
            <person name="Evans K.L."/>
            <person name="Faulkner L."/>
            <person name="Francis F."/>
            <person name="Frankland J."/>
            <person name="Fraser A.E."/>
            <person name="Galgoczy P."/>
            <person name="Gilbert J."/>
            <person name="Gill R."/>
            <person name="Gloeckner G."/>
            <person name="Gregory S.G."/>
            <person name="Gribble S."/>
            <person name="Griffiths C."/>
            <person name="Grocock R."/>
            <person name="Gu Y."/>
            <person name="Gwilliam R."/>
            <person name="Hamilton C."/>
            <person name="Hart E.A."/>
            <person name="Hawes A."/>
            <person name="Heath P.D."/>
            <person name="Heitmann K."/>
            <person name="Hennig S."/>
            <person name="Hernandez J."/>
            <person name="Hinzmann B."/>
            <person name="Ho S."/>
            <person name="Hoffs M."/>
            <person name="Howden P.J."/>
            <person name="Huckle E.J."/>
            <person name="Hume J."/>
            <person name="Hunt P.J."/>
            <person name="Hunt A.R."/>
            <person name="Isherwood J."/>
            <person name="Jacob L."/>
            <person name="Johnson D."/>
            <person name="Jones S."/>
            <person name="de Jong P.J."/>
            <person name="Joseph S.S."/>
            <person name="Keenan S."/>
            <person name="Kelly S."/>
            <person name="Kershaw J.K."/>
            <person name="Khan Z."/>
            <person name="Kioschis P."/>
            <person name="Klages S."/>
            <person name="Knights A.J."/>
            <person name="Kosiura A."/>
            <person name="Kovar-Smith C."/>
            <person name="Laird G.K."/>
            <person name="Langford C."/>
            <person name="Lawlor S."/>
            <person name="Leversha M."/>
            <person name="Lewis L."/>
            <person name="Liu W."/>
            <person name="Lloyd C."/>
            <person name="Lloyd D.M."/>
            <person name="Loulseged H."/>
            <person name="Loveland J.E."/>
            <person name="Lovell J.D."/>
            <person name="Lozado R."/>
            <person name="Lu J."/>
            <person name="Lyne R."/>
            <person name="Ma J."/>
            <person name="Maheshwari M."/>
            <person name="Matthews L.H."/>
            <person name="McDowall J."/>
            <person name="McLaren S."/>
            <person name="McMurray A."/>
            <person name="Meidl P."/>
            <person name="Meitinger T."/>
            <person name="Milne S."/>
            <person name="Miner G."/>
            <person name="Mistry S.L."/>
            <person name="Morgan M."/>
            <person name="Morris S."/>
            <person name="Mueller I."/>
            <person name="Mullikin J.C."/>
            <person name="Nguyen N."/>
            <person name="Nordsiek G."/>
            <person name="Nyakatura G."/>
            <person name="O'dell C.N."/>
            <person name="Okwuonu G."/>
            <person name="Palmer S."/>
            <person name="Pandian R."/>
            <person name="Parker D."/>
            <person name="Parrish J."/>
            <person name="Pasternak S."/>
            <person name="Patel D."/>
            <person name="Pearce A.V."/>
            <person name="Pearson D.M."/>
            <person name="Pelan S.E."/>
            <person name="Perez L."/>
            <person name="Porter K.M."/>
            <person name="Ramsey Y."/>
            <person name="Reichwald K."/>
            <person name="Rhodes S."/>
            <person name="Ridler K.A."/>
            <person name="Schlessinger D."/>
            <person name="Schueler M.G."/>
            <person name="Sehra H.K."/>
            <person name="Shaw-Smith C."/>
            <person name="Shen H."/>
            <person name="Sheridan E.M."/>
            <person name="Shownkeen R."/>
            <person name="Skuce C.D."/>
            <person name="Smith M.L."/>
            <person name="Sotheran E.C."/>
            <person name="Steingruber H.E."/>
            <person name="Steward C.A."/>
            <person name="Storey R."/>
            <person name="Swann R.M."/>
            <person name="Swarbreck D."/>
            <person name="Tabor P.E."/>
            <person name="Taudien S."/>
            <person name="Taylor T."/>
            <person name="Teague B."/>
            <person name="Thomas K."/>
            <person name="Thorpe A."/>
            <person name="Timms K."/>
            <person name="Tracey A."/>
            <person name="Trevanion S."/>
            <person name="Tromans A.C."/>
            <person name="d'Urso M."/>
            <person name="Verduzco D."/>
            <person name="Villasana D."/>
            <person name="Waldron L."/>
            <person name="Wall M."/>
            <person name="Wang Q."/>
            <person name="Warren J."/>
            <person name="Warry G.L."/>
            <person name="Wei X."/>
            <person name="West A."/>
            <person name="Whitehead S.L."/>
            <person name="Whiteley M.N."/>
            <person name="Wilkinson J.E."/>
            <person name="Willey D.L."/>
            <person name="Williams G."/>
            <person name="Williams L."/>
            <person name="Williamson A."/>
            <person name="Williamson H."/>
            <person name="Wilming L."/>
            <person name="Woodmansey R.L."/>
            <person name="Wray P.W."/>
            <person name="Yen J."/>
            <person name="Zhang J."/>
            <person name="Zhou J."/>
            <person name="Zoghbi H."/>
            <person name="Zorilla S."/>
            <person name="Buck D."/>
            <person name="Reinhardt R."/>
            <person name="Poustka A."/>
            <person name="Rosenthal A."/>
            <person name="Lehrach H."/>
            <person name="Meindl A."/>
            <person name="Minx P.J."/>
            <person name="Hillier L.W."/>
            <person name="Willard H.F."/>
            <person name="Wilson R.K."/>
            <person name="Waterston R.H."/>
            <person name="Rice C.M."/>
            <person name="Vaudin M."/>
            <person name="Coulson A."/>
            <person name="Nelson D.L."/>
            <person name="Weinstock G."/>
            <person name="Sulston J.E."/>
            <person name="Durbin R.M."/>
            <person name="Hubbard T."/>
            <person name="Gibbs R.A."/>
            <person name="Beck S."/>
            <person name="Rogers J."/>
            <person name="Bentley D.R."/>
        </authorList>
    </citation>
    <scope>NUCLEOTIDE SEQUENCE [LARGE SCALE GENOMIC DNA]</scope>
</reference>
<reference key="5">
    <citation type="journal article" date="2004" name="Genome Res.">
        <title>The status, quality, and expansion of the NIH full-length cDNA project: the Mammalian Gene Collection (MGC).</title>
        <authorList>
            <consortium name="The MGC Project Team"/>
        </authorList>
    </citation>
    <scope>NUCLEOTIDE SEQUENCE [LARGE SCALE MRNA]</scope>
    <source>
        <tissue>Uterus</tissue>
    </source>
</reference>
<reference key="6">
    <citation type="journal article" date="2006" name="Cell. Microbiol.">
        <title>Transcriptomic and proteomic analyses of rhabdomyosarcoma cells reveal differential cellular gene expression in response to enterovirus 71 infection.</title>
        <authorList>
            <person name="Leong W.F."/>
            <person name="Chow V.T."/>
        </authorList>
    </citation>
    <scope>INDUCTION</scope>
    <scope>IDENTIFICATION BY MASS SPECTROMETRY</scope>
</reference>
<reference key="7">
    <citation type="journal article" date="2008" name="Cancer Res.">
        <title>Pim kinases promote cell cycle progression by phosphorylating and down-regulating p27Kip1 at the transcriptional and posttranscriptional levels.</title>
        <authorList>
            <person name="Morishita D."/>
            <person name="Katayama R."/>
            <person name="Sekimizu K."/>
            <person name="Tsuruo T."/>
            <person name="Fujita N."/>
        </authorList>
    </citation>
    <scope>FUNCTION IN PHOSPHORYLATION OF CDKN1B</scope>
</reference>
<reference key="8">
    <citation type="journal article" date="2009" name="J. Surg. Res.">
        <title>Serine/threonine kinase Pim-2 promotes liver tumorigenesis induction through mediating survival and preventing apoptosis of liver cell.</title>
        <authorList>
            <person name="Gong J."/>
            <person name="Wang J."/>
            <person name="Ren K."/>
            <person name="Liu C."/>
            <person name="Li B."/>
            <person name="Shi Y."/>
        </authorList>
    </citation>
    <scope>FUNCTION</scope>
    <scope>TISSUE SPECIFICITY</scope>
</reference>
<reference key="9">
    <citation type="journal article" date="2010" name="Int. J. Biochem. Cell Biol.">
        <title>Pim-2 phosphorylation of p21(Cip1/WAF1) enhances its stability and inhibits cell proliferation in HCT116 cells.</title>
        <authorList>
            <person name="Wang Z."/>
            <person name="Zhang Y."/>
            <person name="Gu J.J."/>
            <person name="Davitt C."/>
            <person name="Reeves R."/>
            <person name="Magnuson N.S."/>
        </authorList>
    </citation>
    <scope>FUNCTION IN PHOSPHORYLATION OF CDKN1A</scope>
</reference>
<reference key="10">
    <citation type="journal article" date="2009" name="PLoS ONE">
        <title>Crystal structure of the PIM2 kinase in complex with an organoruthenium inhibitor.</title>
        <authorList>
            <person name="Bullock A.N."/>
            <person name="Russo S."/>
            <person name="Amos A."/>
            <person name="Pagano N."/>
            <person name="Bregman H."/>
            <person name="Debreczeni J.E."/>
            <person name="Lee W.H."/>
            <person name="von Delft F."/>
            <person name="Meggers E."/>
            <person name="Knapp S."/>
        </authorList>
    </citation>
    <scope>X-RAY CRYSTALLOGRAPHY (2.8 ANGSTROMS) IN COMPLEX WITH RUTHENIUM-PYRIDOCARBAZOLE-1</scope>
</reference>
<reference key="11">
    <citation type="journal article" date="2007" name="Nature">
        <title>Patterns of somatic mutation in human cancer genomes.</title>
        <authorList>
            <person name="Greenman C."/>
            <person name="Stephens P."/>
            <person name="Smith R."/>
            <person name="Dalgliesh G.L."/>
            <person name="Hunter C."/>
            <person name="Bignell G."/>
            <person name="Davies H."/>
            <person name="Teague J."/>
            <person name="Butler A."/>
            <person name="Stevens C."/>
            <person name="Edkins S."/>
            <person name="O'Meara S."/>
            <person name="Vastrik I."/>
            <person name="Schmidt E.E."/>
            <person name="Avis T."/>
            <person name="Barthorpe S."/>
            <person name="Bhamra G."/>
            <person name="Buck G."/>
            <person name="Choudhury B."/>
            <person name="Clements J."/>
            <person name="Cole J."/>
            <person name="Dicks E."/>
            <person name="Forbes S."/>
            <person name="Gray K."/>
            <person name="Halliday K."/>
            <person name="Harrison R."/>
            <person name="Hills K."/>
            <person name="Hinton J."/>
            <person name="Jenkinson A."/>
            <person name="Jones D."/>
            <person name="Menzies A."/>
            <person name="Mironenko T."/>
            <person name="Perry J."/>
            <person name="Raine K."/>
            <person name="Richardson D."/>
            <person name="Shepherd R."/>
            <person name="Small A."/>
            <person name="Tofts C."/>
            <person name="Varian J."/>
            <person name="Webb T."/>
            <person name="West S."/>
            <person name="Widaa S."/>
            <person name="Yates A."/>
            <person name="Cahill D.P."/>
            <person name="Louis D.N."/>
            <person name="Goldstraw P."/>
            <person name="Nicholson A.G."/>
            <person name="Brasseur F."/>
            <person name="Looijenga L."/>
            <person name="Weber B.L."/>
            <person name="Chiew Y.-E."/>
            <person name="DeFazio A."/>
            <person name="Greaves M.F."/>
            <person name="Green A.R."/>
            <person name="Campbell P."/>
            <person name="Birney E."/>
            <person name="Easton D.F."/>
            <person name="Chenevix-Trench G."/>
            <person name="Tan M.-H."/>
            <person name="Khoo S.K."/>
            <person name="Teh B.T."/>
            <person name="Yuen S.T."/>
            <person name="Leung S.Y."/>
            <person name="Wooster R."/>
            <person name="Futreal P.A."/>
            <person name="Stratton M.R."/>
        </authorList>
    </citation>
    <scope>VARIANTS [LARGE SCALE ANALYSIS] ASP-138 AND VAL-280</scope>
</reference>
<protein>
    <recommendedName>
        <fullName>Serine/threonine-protein kinase pim-2</fullName>
        <ecNumber>2.7.11.1</ecNumber>
    </recommendedName>
    <alternativeName>
        <fullName>Pim-2h</fullName>
    </alternativeName>
</protein>
<keyword id="KW-0002">3D-structure</keyword>
<keyword id="KW-0053">Apoptosis</keyword>
<keyword id="KW-0067">ATP-binding</keyword>
<keyword id="KW-0131">Cell cycle</keyword>
<keyword id="KW-0418">Kinase</keyword>
<keyword id="KW-0547">Nucleotide-binding</keyword>
<keyword id="KW-0597">Phosphoprotein</keyword>
<keyword id="KW-1267">Proteomics identification</keyword>
<keyword id="KW-0656">Proto-oncogene</keyword>
<keyword id="KW-1185">Reference proteome</keyword>
<keyword id="KW-0723">Serine/threonine-protein kinase</keyword>
<keyword id="KW-0808">Transferase</keyword>
<dbReference type="EC" id="2.7.11.1"/>
<dbReference type="EMBL" id="U77735">
    <property type="protein sequence ID" value="AAC78506.1"/>
    <property type="status" value="ALT_FRAME"/>
    <property type="molecule type" value="mRNA"/>
</dbReference>
<dbReference type="EMBL" id="AK290931">
    <property type="protein sequence ID" value="BAF83620.1"/>
    <property type="molecule type" value="mRNA"/>
</dbReference>
<dbReference type="EMBL" id="AB042425">
    <property type="protein sequence ID" value="BAA95613.1"/>
    <property type="molecule type" value="Genomic_DNA"/>
</dbReference>
<dbReference type="EMBL" id="AF207550">
    <property type="status" value="NOT_ANNOTATED_CDS"/>
    <property type="molecule type" value="Genomic_DNA"/>
</dbReference>
<dbReference type="EMBL" id="BC018111">
    <property type="protein sequence ID" value="AAH18111.1"/>
    <property type="molecule type" value="mRNA"/>
</dbReference>
<dbReference type="CCDS" id="CCDS14312.1"/>
<dbReference type="RefSeq" id="NP_006866.2">
    <property type="nucleotide sequence ID" value="NM_006875.3"/>
</dbReference>
<dbReference type="PDB" id="2IWI">
    <property type="method" value="X-ray"/>
    <property type="resolution" value="2.80 A"/>
    <property type="chains" value="A/B=1-311"/>
</dbReference>
<dbReference type="PDB" id="4X7Q">
    <property type="method" value="X-ray"/>
    <property type="resolution" value="2.33 A"/>
    <property type="chains" value="A/B=1-311"/>
</dbReference>
<dbReference type="PDBsum" id="2IWI"/>
<dbReference type="PDBsum" id="4X7Q"/>
<dbReference type="SMR" id="Q9P1W9"/>
<dbReference type="BioGRID" id="116228">
    <property type="interactions" value="39"/>
</dbReference>
<dbReference type="FunCoup" id="Q9P1W9">
    <property type="interactions" value="441"/>
</dbReference>
<dbReference type="IntAct" id="Q9P1W9">
    <property type="interactions" value="25"/>
</dbReference>
<dbReference type="MINT" id="Q9P1W9"/>
<dbReference type="STRING" id="9606.ENSP00000365692"/>
<dbReference type="BindingDB" id="Q9P1W9"/>
<dbReference type="ChEMBL" id="CHEMBL4523"/>
<dbReference type="DrugBank" id="DB14943">
    <property type="generic name" value="LGH-447"/>
</dbReference>
<dbReference type="DrugCentral" id="Q9P1W9"/>
<dbReference type="GuidetoPHARMACOLOGY" id="2159"/>
<dbReference type="GlyGen" id="Q9P1W9">
    <property type="glycosylation" value="1 site"/>
</dbReference>
<dbReference type="iPTMnet" id="Q9P1W9"/>
<dbReference type="PhosphoSitePlus" id="Q9P1W9"/>
<dbReference type="BioMuta" id="PIM2"/>
<dbReference type="DMDM" id="20139243"/>
<dbReference type="MassIVE" id="Q9P1W9"/>
<dbReference type="PaxDb" id="9606-ENSP00000365692"/>
<dbReference type="PeptideAtlas" id="Q9P1W9"/>
<dbReference type="ProteomicsDB" id="83676"/>
<dbReference type="Pumba" id="Q9P1W9"/>
<dbReference type="Antibodypedia" id="415">
    <property type="antibodies" value="490 antibodies from 40 providers"/>
</dbReference>
<dbReference type="DNASU" id="11040"/>
<dbReference type="Ensembl" id="ENST00000376509.4">
    <property type="protein sequence ID" value="ENSP00000365692.4"/>
    <property type="gene ID" value="ENSG00000102096.10"/>
</dbReference>
<dbReference type="Ensembl" id="ENST00000710069.1">
    <property type="protein sequence ID" value="ENSP00000518036.1"/>
    <property type="gene ID" value="ENSG00000292210.1"/>
</dbReference>
<dbReference type="GeneID" id="11040"/>
<dbReference type="KEGG" id="hsa:11040"/>
<dbReference type="MANE-Select" id="ENST00000376509.4">
    <property type="protein sequence ID" value="ENSP00000365692.4"/>
    <property type="RefSeq nucleotide sequence ID" value="NM_006875.4"/>
    <property type="RefSeq protein sequence ID" value="NP_006866.2"/>
</dbReference>
<dbReference type="UCSC" id="uc004dls.4">
    <property type="organism name" value="human"/>
</dbReference>
<dbReference type="AGR" id="HGNC:8987"/>
<dbReference type="CTD" id="11040"/>
<dbReference type="DisGeNET" id="11040"/>
<dbReference type="GeneCards" id="PIM2"/>
<dbReference type="HGNC" id="HGNC:8987">
    <property type="gene designation" value="PIM2"/>
</dbReference>
<dbReference type="HPA" id="ENSG00000102096">
    <property type="expression patterns" value="Tissue enhanced (bone marrow, intestine, lymphoid tissue)"/>
</dbReference>
<dbReference type="MalaCards" id="PIM2"/>
<dbReference type="MIM" id="300295">
    <property type="type" value="gene"/>
</dbReference>
<dbReference type="neXtProt" id="NX_Q9P1W9"/>
<dbReference type="OpenTargets" id="ENSG00000102096"/>
<dbReference type="PharmGKB" id="PA33319"/>
<dbReference type="VEuPathDB" id="HostDB:ENSG00000102096"/>
<dbReference type="eggNOG" id="KOG0583">
    <property type="taxonomic scope" value="Eukaryota"/>
</dbReference>
<dbReference type="GeneTree" id="ENSGT00940000161689"/>
<dbReference type="InParanoid" id="Q9P1W9"/>
<dbReference type="OMA" id="VCHCHAQ"/>
<dbReference type="OrthoDB" id="10252171at2759"/>
<dbReference type="PAN-GO" id="Q9P1W9">
    <property type="GO annotations" value="5 GO annotations based on evolutionary models"/>
</dbReference>
<dbReference type="PhylomeDB" id="Q9P1W9"/>
<dbReference type="TreeFam" id="TF320810"/>
<dbReference type="PathwayCommons" id="Q9P1W9"/>
<dbReference type="SignaLink" id="Q9P1W9"/>
<dbReference type="SIGNOR" id="Q9P1W9"/>
<dbReference type="BioGRID-ORCS" id="11040">
    <property type="hits" value="24 hits in 822 CRISPR screens"/>
</dbReference>
<dbReference type="ChiTaRS" id="PIM2">
    <property type="organism name" value="human"/>
</dbReference>
<dbReference type="EvolutionaryTrace" id="Q9P1W9"/>
<dbReference type="GeneWiki" id="PIM2_(gene)"/>
<dbReference type="GenomeRNAi" id="11040"/>
<dbReference type="Pharos" id="Q9P1W9">
    <property type="development level" value="Tchem"/>
</dbReference>
<dbReference type="PRO" id="PR:Q9P1W9"/>
<dbReference type="Proteomes" id="UP000005640">
    <property type="component" value="Chromosome X"/>
</dbReference>
<dbReference type="RNAct" id="Q9P1W9">
    <property type="molecule type" value="protein"/>
</dbReference>
<dbReference type="Bgee" id="ENSG00000102096">
    <property type="expression patterns" value="Expressed in granulocyte and 121 other cell types or tissues"/>
</dbReference>
<dbReference type="ExpressionAtlas" id="Q9P1W9">
    <property type="expression patterns" value="baseline and differential"/>
</dbReference>
<dbReference type="GO" id="GO:0005737">
    <property type="term" value="C:cytoplasm"/>
    <property type="evidence" value="ECO:0000318"/>
    <property type="project" value="GO_Central"/>
</dbReference>
<dbReference type="GO" id="GO:0005524">
    <property type="term" value="F:ATP binding"/>
    <property type="evidence" value="ECO:0007669"/>
    <property type="project" value="UniProtKB-KW"/>
</dbReference>
<dbReference type="GO" id="GO:0106310">
    <property type="term" value="F:protein serine kinase activity"/>
    <property type="evidence" value="ECO:0007669"/>
    <property type="project" value="RHEA"/>
</dbReference>
<dbReference type="GO" id="GO:0004674">
    <property type="term" value="F:protein serine/threonine kinase activity"/>
    <property type="evidence" value="ECO:0000314"/>
    <property type="project" value="UniProtKB"/>
</dbReference>
<dbReference type="GO" id="GO:0008637">
    <property type="term" value="P:apoptotic mitochondrial changes"/>
    <property type="evidence" value="ECO:0007669"/>
    <property type="project" value="Ensembl"/>
</dbReference>
<dbReference type="GO" id="GO:0000082">
    <property type="term" value="P:G1/S transition of mitotic cell cycle"/>
    <property type="evidence" value="ECO:0000314"/>
    <property type="project" value="UniProtKB"/>
</dbReference>
<dbReference type="GO" id="GO:0016236">
    <property type="term" value="P:macroautophagy"/>
    <property type="evidence" value="ECO:0007669"/>
    <property type="project" value="Ensembl"/>
</dbReference>
<dbReference type="GO" id="GO:0043066">
    <property type="term" value="P:negative regulation of apoptotic process"/>
    <property type="evidence" value="ECO:0000314"/>
    <property type="project" value="UniProtKB"/>
</dbReference>
<dbReference type="GO" id="GO:0008285">
    <property type="term" value="P:negative regulation of cell population proliferation"/>
    <property type="evidence" value="ECO:0000314"/>
    <property type="project" value="UniProtKB"/>
</dbReference>
<dbReference type="GO" id="GO:0010508">
    <property type="term" value="P:positive regulation of autophagy"/>
    <property type="evidence" value="ECO:0000250"/>
    <property type="project" value="UniProtKB"/>
</dbReference>
<dbReference type="GO" id="GO:0043123">
    <property type="term" value="P:positive regulation of canonical NF-kappaB signal transduction"/>
    <property type="evidence" value="ECO:0000250"/>
    <property type="project" value="UniProtKB"/>
</dbReference>
<dbReference type="GO" id="GO:0045893">
    <property type="term" value="P:positive regulation of DNA-templated transcription"/>
    <property type="evidence" value="ECO:0000250"/>
    <property type="project" value="UniProtKB"/>
</dbReference>
<dbReference type="GO" id="GO:0016239">
    <property type="term" value="P:positive regulation of macroautophagy"/>
    <property type="evidence" value="ECO:0007669"/>
    <property type="project" value="Ensembl"/>
</dbReference>
<dbReference type="GO" id="GO:0006468">
    <property type="term" value="P:protein phosphorylation"/>
    <property type="evidence" value="ECO:0000314"/>
    <property type="project" value="UniProtKB"/>
</dbReference>
<dbReference type="GO" id="GO:0050821">
    <property type="term" value="P:protein stabilization"/>
    <property type="evidence" value="ECO:0000315"/>
    <property type="project" value="UniProtKB"/>
</dbReference>
<dbReference type="GO" id="GO:0007346">
    <property type="term" value="P:regulation of mitotic cell cycle"/>
    <property type="evidence" value="ECO:0000318"/>
    <property type="project" value="GO_Central"/>
</dbReference>
<dbReference type="GO" id="GO:0009615">
    <property type="term" value="P:response to virus"/>
    <property type="evidence" value="ECO:0000270"/>
    <property type="project" value="UniProtKB"/>
</dbReference>
<dbReference type="CDD" id="cd14101">
    <property type="entry name" value="STKc_PIM2"/>
    <property type="match status" value="1"/>
</dbReference>
<dbReference type="FunFam" id="1.10.510.10:FF:000413">
    <property type="entry name" value="Serine/threonine-protein kinase"/>
    <property type="match status" value="1"/>
</dbReference>
<dbReference type="FunFam" id="3.30.200.20:FF:000363">
    <property type="entry name" value="Serine/threonine-protein kinase"/>
    <property type="match status" value="1"/>
</dbReference>
<dbReference type="Gene3D" id="3.30.200.20">
    <property type="entry name" value="Phosphorylase Kinase, domain 1"/>
    <property type="match status" value="1"/>
</dbReference>
<dbReference type="Gene3D" id="1.10.510.10">
    <property type="entry name" value="Transferase(Phosphotransferase) domain 1"/>
    <property type="match status" value="1"/>
</dbReference>
<dbReference type="InterPro" id="IPR011009">
    <property type="entry name" value="Kinase-like_dom_sf"/>
</dbReference>
<dbReference type="InterPro" id="IPR017348">
    <property type="entry name" value="PIM1/2/3"/>
</dbReference>
<dbReference type="InterPro" id="IPR051138">
    <property type="entry name" value="PIM_Ser/Thr_kinase"/>
</dbReference>
<dbReference type="InterPro" id="IPR000719">
    <property type="entry name" value="Prot_kinase_dom"/>
</dbReference>
<dbReference type="InterPro" id="IPR017441">
    <property type="entry name" value="Protein_kinase_ATP_BS"/>
</dbReference>
<dbReference type="InterPro" id="IPR008271">
    <property type="entry name" value="Ser/Thr_kinase_AS"/>
</dbReference>
<dbReference type="PANTHER" id="PTHR22984">
    <property type="entry name" value="SERINE/THREONINE-PROTEIN KINASE PIM"/>
    <property type="match status" value="1"/>
</dbReference>
<dbReference type="PANTHER" id="PTHR22984:SF10">
    <property type="entry name" value="SERINE_THREONINE-PROTEIN KINASE PIM-2"/>
    <property type="match status" value="1"/>
</dbReference>
<dbReference type="Pfam" id="PF00069">
    <property type="entry name" value="Pkinase"/>
    <property type="match status" value="1"/>
</dbReference>
<dbReference type="PIRSF" id="PIRSF037993">
    <property type="entry name" value="STPK_Pim-1"/>
    <property type="match status" value="1"/>
</dbReference>
<dbReference type="SMART" id="SM00220">
    <property type="entry name" value="S_TKc"/>
    <property type="match status" value="1"/>
</dbReference>
<dbReference type="SUPFAM" id="SSF56112">
    <property type="entry name" value="Protein kinase-like (PK-like)"/>
    <property type="match status" value="1"/>
</dbReference>
<dbReference type="PROSITE" id="PS00107">
    <property type="entry name" value="PROTEIN_KINASE_ATP"/>
    <property type="match status" value="1"/>
</dbReference>
<dbReference type="PROSITE" id="PS50011">
    <property type="entry name" value="PROTEIN_KINASE_DOM"/>
    <property type="match status" value="1"/>
</dbReference>
<dbReference type="PROSITE" id="PS00108">
    <property type="entry name" value="PROTEIN_KINASE_ST"/>
    <property type="match status" value="1"/>
</dbReference>
<sequence length="311" mass="34190">MLTKPLQGPPAPPGTPTPPPGGKDREAFEAEYRLGPLLGKGGFGTVFAGHRLTDRLQVAIKVIPRNRVLGWSPLSDSVTCPLEVALLWKVGAGGGHPGVIRLLDWFETQEGFMLVLERPLPAQDLFDYITEKGPLGEGPSRCFFGQVVAAIQHCHSRGVVHRDIKDENILIDLRRGCAKLIDFGSGALLHDEPYTDFDGTRVYSPPEWISRHQYHALPATVWSLGILLYDMVCGDIPFERDQEILEAELHFPAHVSPDCCALIRRCLAPKPSSRPSLEEILLDPWMQTPAEDVPLNPSKGGPAPLAWSLLP</sequence>
<organism>
    <name type="scientific">Homo sapiens</name>
    <name type="common">Human</name>
    <dbReference type="NCBI Taxonomy" id="9606"/>
    <lineage>
        <taxon>Eukaryota</taxon>
        <taxon>Metazoa</taxon>
        <taxon>Chordata</taxon>
        <taxon>Craniata</taxon>
        <taxon>Vertebrata</taxon>
        <taxon>Euteleostomi</taxon>
        <taxon>Mammalia</taxon>
        <taxon>Eutheria</taxon>
        <taxon>Euarchontoglires</taxon>
        <taxon>Primates</taxon>
        <taxon>Haplorrhini</taxon>
        <taxon>Catarrhini</taxon>
        <taxon>Hominidae</taxon>
        <taxon>Homo</taxon>
    </lineage>
</organism>
<feature type="chain" id="PRO_0000086532" description="Serine/threonine-protein kinase pim-2">
    <location>
        <begin position="1"/>
        <end position="311"/>
    </location>
</feature>
<feature type="domain" description="Protein kinase" evidence="2">
    <location>
        <begin position="32"/>
        <end position="286"/>
    </location>
</feature>
<feature type="region of interest" description="Disordered" evidence="4">
    <location>
        <begin position="1"/>
        <end position="25"/>
    </location>
</feature>
<feature type="compositionally biased region" description="Pro residues" evidence="4">
    <location>
        <begin position="7"/>
        <end position="21"/>
    </location>
</feature>
<feature type="active site" description="Proton acceptor" evidence="2 3">
    <location>
        <position position="163"/>
    </location>
</feature>
<feature type="binding site" evidence="2">
    <location>
        <begin position="38"/>
        <end position="46"/>
    </location>
    <ligand>
        <name>ATP</name>
        <dbReference type="ChEBI" id="CHEBI:30616"/>
    </ligand>
</feature>
<feature type="binding site" evidence="2">
    <location>
        <position position="61"/>
    </location>
    <ligand>
        <name>ATP</name>
        <dbReference type="ChEBI" id="CHEBI:30616"/>
    </ligand>
</feature>
<feature type="sequence variant" id="VAR_041008" description="In dbSNP:rs35044770." evidence="6">
    <original>G</original>
    <variation>D</variation>
    <location>
        <position position="138"/>
    </location>
</feature>
<feature type="sequence variant" id="VAR_041009" description="In dbSNP:rs35208542." evidence="6">
    <original>I</original>
    <variation>V</variation>
    <location>
        <position position="280"/>
    </location>
</feature>
<feature type="sequence conflict" description="In Ref. 2; BAF83620." evidence="10" ref="2">
    <original>N</original>
    <variation>Y</variation>
    <location>
        <position position="66"/>
    </location>
</feature>
<feature type="helix" evidence="12">
    <location>
        <begin position="28"/>
        <end position="31"/>
    </location>
</feature>
<feature type="strand" evidence="12">
    <location>
        <begin position="32"/>
        <end position="39"/>
    </location>
</feature>
<feature type="strand" evidence="12">
    <location>
        <begin position="45"/>
        <end position="51"/>
    </location>
</feature>
<feature type="turn" evidence="12">
    <location>
        <begin position="52"/>
        <end position="54"/>
    </location>
</feature>
<feature type="strand" evidence="12">
    <location>
        <begin position="57"/>
        <end position="62"/>
    </location>
</feature>
<feature type="turn" evidence="11">
    <location>
        <begin position="66"/>
        <end position="68"/>
    </location>
</feature>
<feature type="helix" evidence="12">
    <location>
        <begin position="82"/>
        <end position="91"/>
    </location>
</feature>
<feature type="strand" evidence="11">
    <location>
        <begin position="97"/>
        <end position="99"/>
    </location>
</feature>
<feature type="strand" evidence="12">
    <location>
        <begin position="102"/>
        <end position="106"/>
    </location>
</feature>
<feature type="strand" evidence="12">
    <location>
        <begin position="113"/>
        <end position="117"/>
    </location>
</feature>
<feature type="strand" evidence="12">
    <location>
        <begin position="120"/>
        <end position="124"/>
    </location>
</feature>
<feature type="helix" evidence="12">
    <location>
        <begin position="125"/>
        <end position="132"/>
    </location>
</feature>
<feature type="helix" evidence="12">
    <location>
        <begin position="137"/>
        <end position="156"/>
    </location>
</feature>
<feature type="helix" evidence="12">
    <location>
        <begin position="166"/>
        <end position="168"/>
    </location>
</feature>
<feature type="strand" evidence="12">
    <location>
        <begin position="169"/>
        <end position="172"/>
    </location>
</feature>
<feature type="turn" evidence="12">
    <location>
        <begin position="173"/>
        <end position="176"/>
    </location>
</feature>
<feature type="strand" evidence="12">
    <location>
        <begin position="177"/>
        <end position="180"/>
    </location>
</feature>
<feature type="helix" evidence="12">
    <location>
        <begin position="183"/>
        <end position="185"/>
    </location>
</feature>
<feature type="helix" evidence="12">
    <location>
        <begin position="201"/>
        <end position="203"/>
    </location>
</feature>
<feature type="helix" evidence="12">
    <location>
        <begin position="206"/>
        <end position="211"/>
    </location>
</feature>
<feature type="helix" evidence="12">
    <location>
        <begin position="216"/>
        <end position="233"/>
    </location>
</feature>
<feature type="helix" evidence="12">
    <location>
        <begin position="241"/>
        <end position="246"/>
    </location>
</feature>
<feature type="helix" evidence="12">
    <location>
        <begin position="257"/>
        <end position="266"/>
    </location>
</feature>
<feature type="helix" evidence="12">
    <location>
        <begin position="271"/>
        <end position="273"/>
    </location>
</feature>
<feature type="helix" evidence="12">
    <location>
        <begin position="277"/>
        <end position="281"/>
    </location>
</feature>
<feature type="helix" evidence="12">
    <location>
        <begin position="284"/>
        <end position="286"/>
    </location>
</feature>
<gene>
    <name type="primary">PIM2</name>
</gene>
<proteinExistence type="evidence at protein level"/>
<name>PIM2_HUMAN</name>
<accession>Q9P1W9</accession>
<accession>A8K4G6</accession>
<accession>Q99739</accession>